<feature type="chain" id="PRO_1000072409" description="Small ribosomal subunit protein uS7">
    <location>
        <begin position="1"/>
        <end position="157"/>
    </location>
</feature>
<proteinExistence type="inferred from homology"/>
<gene>
    <name evidence="1" type="primary">rpsG</name>
    <name type="ordered locus">PsycPRwf_1862</name>
</gene>
<keyword id="KW-0687">Ribonucleoprotein</keyword>
<keyword id="KW-0689">Ribosomal protein</keyword>
<keyword id="KW-0694">RNA-binding</keyword>
<keyword id="KW-0699">rRNA-binding</keyword>
<keyword id="KW-0820">tRNA-binding</keyword>
<comment type="function">
    <text evidence="1">One of the primary rRNA binding proteins, it binds directly to 16S rRNA where it nucleates assembly of the head domain of the 30S subunit. Is located at the subunit interface close to the decoding center, probably blocks exit of the E-site tRNA.</text>
</comment>
<comment type="subunit">
    <text evidence="1">Part of the 30S ribosomal subunit. Contacts proteins S9 and S11.</text>
</comment>
<comment type="similarity">
    <text evidence="1">Belongs to the universal ribosomal protein uS7 family.</text>
</comment>
<organism>
    <name type="scientific">Psychrobacter sp. (strain PRwf-1)</name>
    <dbReference type="NCBI Taxonomy" id="349106"/>
    <lineage>
        <taxon>Bacteria</taxon>
        <taxon>Pseudomonadati</taxon>
        <taxon>Pseudomonadota</taxon>
        <taxon>Gammaproteobacteria</taxon>
        <taxon>Moraxellales</taxon>
        <taxon>Moraxellaceae</taxon>
        <taxon>Psychrobacter</taxon>
    </lineage>
</organism>
<sequence length="157" mass="17695">MPRRRVVATREILPDPKFGSQTIAKFINHVMVDGKKSTAERIVYGALEQVAEKRNIEDPVAFFEEVLENVRPMVEVKARRVGGATYQVPMEVRPSRRTALAMRWLADAASKRSEKSMAHRLAGELGDASEGKGSAVKKRDEVHRMADANKAFSHYRF</sequence>
<dbReference type="EMBL" id="CP000713">
    <property type="protein sequence ID" value="ABQ94802.1"/>
    <property type="molecule type" value="Genomic_DNA"/>
</dbReference>
<dbReference type="SMR" id="A5WGL1"/>
<dbReference type="STRING" id="349106.PsycPRwf_1862"/>
<dbReference type="KEGG" id="prw:PsycPRwf_1862"/>
<dbReference type="eggNOG" id="COG0049">
    <property type="taxonomic scope" value="Bacteria"/>
</dbReference>
<dbReference type="HOGENOM" id="CLU_072226_1_1_6"/>
<dbReference type="GO" id="GO:0015935">
    <property type="term" value="C:small ribosomal subunit"/>
    <property type="evidence" value="ECO:0007669"/>
    <property type="project" value="InterPro"/>
</dbReference>
<dbReference type="GO" id="GO:0019843">
    <property type="term" value="F:rRNA binding"/>
    <property type="evidence" value="ECO:0007669"/>
    <property type="project" value="UniProtKB-UniRule"/>
</dbReference>
<dbReference type="GO" id="GO:0003735">
    <property type="term" value="F:structural constituent of ribosome"/>
    <property type="evidence" value="ECO:0007669"/>
    <property type="project" value="InterPro"/>
</dbReference>
<dbReference type="GO" id="GO:0000049">
    <property type="term" value="F:tRNA binding"/>
    <property type="evidence" value="ECO:0007669"/>
    <property type="project" value="UniProtKB-UniRule"/>
</dbReference>
<dbReference type="GO" id="GO:0006412">
    <property type="term" value="P:translation"/>
    <property type="evidence" value="ECO:0007669"/>
    <property type="project" value="UniProtKB-UniRule"/>
</dbReference>
<dbReference type="CDD" id="cd14869">
    <property type="entry name" value="uS7_Bacteria"/>
    <property type="match status" value="1"/>
</dbReference>
<dbReference type="FunFam" id="1.10.455.10:FF:000001">
    <property type="entry name" value="30S ribosomal protein S7"/>
    <property type="match status" value="1"/>
</dbReference>
<dbReference type="Gene3D" id="1.10.455.10">
    <property type="entry name" value="Ribosomal protein S7 domain"/>
    <property type="match status" value="1"/>
</dbReference>
<dbReference type="HAMAP" id="MF_00480_B">
    <property type="entry name" value="Ribosomal_uS7_B"/>
    <property type="match status" value="1"/>
</dbReference>
<dbReference type="InterPro" id="IPR000235">
    <property type="entry name" value="Ribosomal_uS7"/>
</dbReference>
<dbReference type="InterPro" id="IPR005717">
    <property type="entry name" value="Ribosomal_uS7_bac/org-type"/>
</dbReference>
<dbReference type="InterPro" id="IPR020606">
    <property type="entry name" value="Ribosomal_uS7_CS"/>
</dbReference>
<dbReference type="InterPro" id="IPR023798">
    <property type="entry name" value="Ribosomal_uS7_dom"/>
</dbReference>
<dbReference type="InterPro" id="IPR036823">
    <property type="entry name" value="Ribosomal_uS7_dom_sf"/>
</dbReference>
<dbReference type="NCBIfam" id="TIGR01029">
    <property type="entry name" value="rpsG_bact"/>
    <property type="match status" value="1"/>
</dbReference>
<dbReference type="PANTHER" id="PTHR11205">
    <property type="entry name" value="RIBOSOMAL PROTEIN S7"/>
    <property type="match status" value="1"/>
</dbReference>
<dbReference type="Pfam" id="PF00177">
    <property type="entry name" value="Ribosomal_S7"/>
    <property type="match status" value="1"/>
</dbReference>
<dbReference type="PIRSF" id="PIRSF002122">
    <property type="entry name" value="RPS7p_RPS7a_RPS5e_RPS7o"/>
    <property type="match status" value="1"/>
</dbReference>
<dbReference type="SUPFAM" id="SSF47973">
    <property type="entry name" value="Ribosomal protein S7"/>
    <property type="match status" value="1"/>
</dbReference>
<dbReference type="PROSITE" id="PS00052">
    <property type="entry name" value="RIBOSOMAL_S7"/>
    <property type="match status" value="1"/>
</dbReference>
<name>RS7_PSYWF</name>
<accession>A5WGL1</accession>
<evidence type="ECO:0000255" key="1">
    <source>
        <dbReference type="HAMAP-Rule" id="MF_00480"/>
    </source>
</evidence>
<evidence type="ECO:0000305" key="2"/>
<protein>
    <recommendedName>
        <fullName evidence="1">Small ribosomal subunit protein uS7</fullName>
    </recommendedName>
    <alternativeName>
        <fullName evidence="2">30S ribosomal protein S7</fullName>
    </alternativeName>
</protein>
<reference key="1">
    <citation type="submission" date="2007-05" db="EMBL/GenBank/DDBJ databases">
        <title>Complete sequence of chromosome of Psychrobacter sp. PRwf-1.</title>
        <authorList>
            <consortium name="US DOE Joint Genome Institute"/>
            <person name="Copeland A."/>
            <person name="Lucas S."/>
            <person name="Lapidus A."/>
            <person name="Barry K."/>
            <person name="Detter J.C."/>
            <person name="Glavina del Rio T."/>
            <person name="Hammon N."/>
            <person name="Israni S."/>
            <person name="Dalin E."/>
            <person name="Tice H."/>
            <person name="Pitluck S."/>
            <person name="Chain P."/>
            <person name="Malfatti S."/>
            <person name="Shin M."/>
            <person name="Vergez L."/>
            <person name="Schmutz J."/>
            <person name="Larimer F."/>
            <person name="Land M."/>
            <person name="Hauser L."/>
            <person name="Kyrpides N."/>
            <person name="Kim E."/>
            <person name="Tiedje J."/>
            <person name="Richardson P."/>
        </authorList>
    </citation>
    <scope>NUCLEOTIDE SEQUENCE [LARGE SCALE GENOMIC DNA]</scope>
    <source>
        <strain>PRwf-1</strain>
    </source>
</reference>